<gene>
    <name evidence="1" type="primary">panB</name>
    <name type="ordered locus">Syncc9902_1545</name>
</gene>
<dbReference type="EC" id="2.1.2.11" evidence="1"/>
<dbReference type="EMBL" id="CP000097">
    <property type="protein sequence ID" value="ABB26503.1"/>
    <property type="molecule type" value="Genomic_DNA"/>
</dbReference>
<dbReference type="RefSeq" id="WP_011360321.1">
    <property type="nucleotide sequence ID" value="NC_007513.1"/>
</dbReference>
<dbReference type="SMR" id="Q3AVB7"/>
<dbReference type="STRING" id="316279.Syncc9902_1545"/>
<dbReference type="KEGG" id="sye:Syncc9902_1545"/>
<dbReference type="eggNOG" id="COG0413">
    <property type="taxonomic scope" value="Bacteria"/>
</dbReference>
<dbReference type="HOGENOM" id="CLU_036645_1_0_3"/>
<dbReference type="OrthoDB" id="9781789at2"/>
<dbReference type="UniPathway" id="UPA00028">
    <property type="reaction ID" value="UER00003"/>
</dbReference>
<dbReference type="Proteomes" id="UP000002712">
    <property type="component" value="Chromosome"/>
</dbReference>
<dbReference type="GO" id="GO:0005737">
    <property type="term" value="C:cytoplasm"/>
    <property type="evidence" value="ECO:0007669"/>
    <property type="project" value="UniProtKB-SubCell"/>
</dbReference>
<dbReference type="GO" id="GO:0003864">
    <property type="term" value="F:3-methyl-2-oxobutanoate hydroxymethyltransferase activity"/>
    <property type="evidence" value="ECO:0007669"/>
    <property type="project" value="UniProtKB-UniRule"/>
</dbReference>
<dbReference type="GO" id="GO:0000287">
    <property type="term" value="F:magnesium ion binding"/>
    <property type="evidence" value="ECO:0007669"/>
    <property type="project" value="TreeGrafter"/>
</dbReference>
<dbReference type="GO" id="GO:0015940">
    <property type="term" value="P:pantothenate biosynthetic process"/>
    <property type="evidence" value="ECO:0007669"/>
    <property type="project" value="UniProtKB-UniRule"/>
</dbReference>
<dbReference type="CDD" id="cd06557">
    <property type="entry name" value="KPHMT-like"/>
    <property type="match status" value="1"/>
</dbReference>
<dbReference type="Gene3D" id="3.20.20.60">
    <property type="entry name" value="Phosphoenolpyruvate-binding domains"/>
    <property type="match status" value="1"/>
</dbReference>
<dbReference type="HAMAP" id="MF_00156">
    <property type="entry name" value="PanB"/>
    <property type="match status" value="1"/>
</dbReference>
<dbReference type="InterPro" id="IPR003700">
    <property type="entry name" value="Pantoate_hydroxy_MeTrfase"/>
</dbReference>
<dbReference type="InterPro" id="IPR015813">
    <property type="entry name" value="Pyrv/PenolPyrv_kinase-like_dom"/>
</dbReference>
<dbReference type="InterPro" id="IPR040442">
    <property type="entry name" value="Pyrv_kinase-like_dom_sf"/>
</dbReference>
<dbReference type="NCBIfam" id="TIGR00222">
    <property type="entry name" value="panB"/>
    <property type="match status" value="1"/>
</dbReference>
<dbReference type="NCBIfam" id="NF001452">
    <property type="entry name" value="PRK00311.1"/>
    <property type="match status" value="1"/>
</dbReference>
<dbReference type="PANTHER" id="PTHR20881">
    <property type="entry name" value="3-METHYL-2-OXOBUTANOATE HYDROXYMETHYLTRANSFERASE"/>
    <property type="match status" value="1"/>
</dbReference>
<dbReference type="PANTHER" id="PTHR20881:SF0">
    <property type="entry name" value="3-METHYL-2-OXOBUTANOATE HYDROXYMETHYLTRANSFERASE"/>
    <property type="match status" value="1"/>
</dbReference>
<dbReference type="Pfam" id="PF02548">
    <property type="entry name" value="Pantoate_transf"/>
    <property type="match status" value="1"/>
</dbReference>
<dbReference type="PIRSF" id="PIRSF000388">
    <property type="entry name" value="Pantoate_hydroxy_MeTrfase"/>
    <property type="match status" value="1"/>
</dbReference>
<dbReference type="SUPFAM" id="SSF51621">
    <property type="entry name" value="Phosphoenolpyruvate/pyruvate domain"/>
    <property type="match status" value="1"/>
</dbReference>
<sequence>MRPFDLIRFKQSGRPITMLTAWDCLSAALVEAAGADVVLVGDSLGMVALGHATTLPVTLDQMLHHTLAVARGFTASHDQQPLLVCDLPFLSYQCGPDLAVAAAGKLLKESSAAAVKLEGADPEIVAVVDRLVRMGIPVMGHLGLTPQAVHRLGYRRQALDPVSQDRLIEQALTLEKTGCFALVLEHVPSELAARARHELGIPVIGIGAGDDCDGQVRVTADLLGLTPHQPPFSPPQLNGRQLCIEALRGWIQEHQSSSPTTAPPQAEPDC</sequence>
<proteinExistence type="inferred from homology"/>
<protein>
    <recommendedName>
        <fullName evidence="1">3-methyl-2-oxobutanoate hydroxymethyltransferase</fullName>
        <ecNumber evidence="1">2.1.2.11</ecNumber>
    </recommendedName>
    <alternativeName>
        <fullName evidence="1">Ketopantoate hydroxymethyltransferase</fullName>
        <shortName evidence="1">KPHMT</shortName>
    </alternativeName>
</protein>
<keyword id="KW-0963">Cytoplasm</keyword>
<keyword id="KW-0460">Magnesium</keyword>
<keyword id="KW-0479">Metal-binding</keyword>
<keyword id="KW-0566">Pantothenate biosynthesis</keyword>
<keyword id="KW-1185">Reference proteome</keyword>
<keyword id="KW-0808">Transferase</keyword>
<evidence type="ECO:0000255" key="1">
    <source>
        <dbReference type="HAMAP-Rule" id="MF_00156"/>
    </source>
</evidence>
<reference key="1">
    <citation type="submission" date="2005-08" db="EMBL/GenBank/DDBJ databases">
        <title>Complete sequence of Synechococcus sp. CC9902.</title>
        <authorList>
            <person name="Copeland A."/>
            <person name="Lucas S."/>
            <person name="Lapidus A."/>
            <person name="Barry K."/>
            <person name="Detter J.C."/>
            <person name="Glavina T."/>
            <person name="Hammon N."/>
            <person name="Israni S."/>
            <person name="Pitluck S."/>
            <person name="Martinez M."/>
            <person name="Schmutz J."/>
            <person name="Larimer F."/>
            <person name="Land M."/>
            <person name="Kyrpides N."/>
            <person name="Ivanova N."/>
            <person name="Richardson P."/>
        </authorList>
    </citation>
    <scope>NUCLEOTIDE SEQUENCE [LARGE SCALE GENOMIC DNA]</scope>
    <source>
        <strain>CC9902</strain>
    </source>
</reference>
<name>PANB_SYNS9</name>
<comment type="function">
    <text evidence="1">Catalyzes the reversible reaction in which hydroxymethyl group from 5,10-methylenetetrahydrofolate is transferred onto alpha-ketoisovalerate to form ketopantoate.</text>
</comment>
<comment type="catalytic activity">
    <reaction evidence="1">
        <text>3-methyl-2-oxobutanoate + (6R)-5,10-methylene-5,6,7,8-tetrahydrofolate + H2O = 2-dehydropantoate + (6S)-5,6,7,8-tetrahydrofolate</text>
        <dbReference type="Rhea" id="RHEA:11824"/>
        <dbReference type="ChEBI" id="CHEBI:11561"/>
        <dbReference type="ChEBI" id="CHEBI:11851"/>
        <dbReference type="ChEBI" id="CHEBI:15377"/>
        <dbReference type="ChEBI" id="CHEBI:15636"/>
        <dbReference type="ChEBI" id="CHEBI:57453"/>
        <dbReference type="EC" id="2.1.2.11"/>
    </reaction>
</comment>
<comment type="cofactor">
    <cofactor evidence="1">
        <name>Mg(2+)</name>
        <dbReference type="ChEBI" id="CHEBI:18420"/>
    </cofactor>
    <text evidence="1">Binds 1 Mg(2+) ion per subunit.</text>
</comment>
<comment type="pathway">
    <text evidence="1">Cofactor biosynthesis; (R)-pantothenate biosynthesis; (R)-pantoate from 3-methyl-2-oxobutanoate: step 1/2.</text>
</comment>
<comment type="subunit">
    <text evidence="1">Homodecamer; pentamer of dimers.</text>
</comment>
<comment type="subcellular location">
    <subcellularLocation>
        <location evidence="1">Cytoplasm</location>
    </subcellularLocation>
</comment>
<comment type="similarity">
    <text evidence="1">Belongs to the PanB family.</text>
</comment>
<feature type="chain" id="PRO_0000297390" description="3-methyl-2-oxobutanoate hydroxymethyltransferase">
    <location>
        <begin position="1"/>
        <end position="270"/>
    </location>
</feature>
<feature type="active site" description="Proton acceptor" evidence="1">
    <location>
        <position position="185"/>
    </location>
</feature>
<feature type="binding site" evidence="1">
    <location>
        <begin position="42"/>
        <end position="43"/>
    </location>
    <ligand>
        <name>3-methyl-2-oxobutanoate</name>
        <dbReference type="ChEBI" id="CHEBI:11851"/>
    </ligand>
</feature>
<feature type="binding site" evidence="1">
    <location>
        <position position="42"/>
    </location>
    <ligand>
        <name>Mg(2+)</name>
        <dbReference type="ChEBI" id="CHEBI:18420"/>
    </ligand>
</feature>
<feature type="binding site" evidence="1">
    <location>
        <position position="86"/>
    </location>
    <ligand>
        <name>3-methyl-2-oxobutanoate</name>
        <dbReference type="ChEBI" id="CHEBI:11851"/>
    </ligand>
</feature>
<feature type="binding site" evidence="1">
    <location>
        <position position="86"/>
    </location>
    <ligand>
        <name>Mg(2+)</name>
        <dbReference type="ChEBI" id="CHEBI:18420"/>
    </ligand>
</feature>
<feature type="binding site" evidence="1">
    <location>
        <position position="116"/>
    </location>
    <ligand>
        <name>3-methyl-2-oxobutanoate</name>
        <dbReference type="ChEBI" id="CHEBI:11851"/>
    </ligand>
</feature>
<feature type="binding site" evidence="1">
    <location>
        <position position="118"/>
    </location>
    <ligand>
        <name>Mg(2+)</name>
        <dbReference type="ChEBI" id="CHEBI:18420"/>
    </ligand>
</feature>
<organism>
    <name type="scientific">Synechococcus sp. (strain CC9902)</name>
    <dbReference type="NCBI Taxonomy" id="316279"/>
    <lineage>
        <taxon>Bacteria</taxon>
        <taxon>Bacillati</taxon>
        <taxon>Cyanobacteriota</taxon>
        <taxon>Cyanophyceae</taxon>
        <taxon>Synechococcales</taxon>
        <taxon>Synechococcaceae</taxon>
        <taxon>Synechococcus</taxon>
    </lineage>
</organism>
<accession>Q3AVB7</accession>